<accession>B2IMG7</accession>
<sequence length="44" mass="5265">MKRTYQPSKLRRARKHGFRNRMSTKNGRRVLAARRRKGRKVLAA</sequence>
<feature type="chain" id="PRO_1000196119" description="Large ribosomal subunit protein bL34">
    <location>
        <begin position="1"/>
        <end position="44"/>
    </location>
</feature>
<feature type="region of interest" description="Disordered" evidence="2">
    <location>
        <begin position="1"/>
        <end position="44"/>
    </location>
</feature>
<feature type="compositionally biased region" description="Basic residues" evidence="2">
    <location>
        <begin position="1"/>
        <end position="19"/>
    </location>
</feature>
<feature type="compositionally biased region" description="Basic residues" evidence="2">
    <location>
        <begin position="26"/>
        <end position="44"/>
    </location>
</feature>
<comment type="similarity">
    <text evidence="1">Belongs to the bacterial ribosomal protein bL34 family.</text>
</comment>
<keyword id="KW-0687">Ribonucleoprotein</keyword>
<keyword id="KW-0689">Ribosomal protein</keyword>
<gene>
    <name evidence="1" type="primary">rpmH</name>
    <name type="ordered locus">SPCG_1958</name>
</gene>
<protein>
    <recommendedName>
        <fullName evidence="1">Large ribosomal subunit protein bL34</fullName>
    </recommendedName>
    <alternativeName>
        <fullName evidence="3">50S ribosomal protein L34</fullName>
    </alternativeName>
</protein>
<dbReference type="EMBL" id="CP001033">
    <property type="protein sequence ID" value="ACB91211.1"/>
    <property type="molecule type" value="Genomic_DNA"/>
</dbReference>
<dbReference type="RefSeq" id="WP_000831905.1">
    <property type="nucleotide sequence ID" value="NC_010582.1"/>
</dbReference>
<dbReference type="SMR" id="B2IMG7"/>
<dbReference type="GeneID" id="93738550"/>
<dbReference type="KEGG" id="spw:SPCG_1958"/>
<dbReference type="HOGENOM" id="CLU_129938_2_0_9"/>
<dbReference type="GO" id="GO:1990904">
    <property type="term" value="C:ribonucleoprotein complex"/>
    <property type="evidence" value="ECO:0007669"/>
    <property type="project" value="UniProtKB-KW"/>
</dbReference>
<dbReference type="GO" id="GO:0005840">
    <property type="term" value="C:ribosome"/>
    <property type="evidence" value="ECO:0007669"/>
    <property type="project" value="UniProtKB-KW"/>
</dbReference>
<dbReference type="GO" id="GO:0003735">
    <property type="term" value="F:structural constituent of ribosome"/>
    <property type="evidence" value="ECO:0007669"/>
    <property type="project" value="InterPro"/>
</dbReference>
<dbReference type="GO" id="GO:0006412">
    <property type="term" value="P:translation"/>
    <property type="evidence" value="ECO:0007669"/>
    <property type="project" value="UniProtKB-UniRule"/>
</dbReference>
<dbReference type="FunFam" id="1.10.287.3980:FF:000001">
    <property type="entry name" value="Mitochondrial ribosomal protein L34"/>
    <property type="match status" value="1"/>
</dbReference>
<dbReference type="Gene3D" id="1.10.287.3980">
    <property type="match status" value="1"/>
</dbReference>
<dbReference type="HAMAP" id="MF_00391">
    <property type="entry name" value="Ribosomal_bL34"/>
    <property type="match status" value="1"/>
</dbReference>
<dbReference type="InterPro" id="IPR000271">
    <property type="entry name" value="Ribosomal_bL34"/>
</dbReference>
<dbReference type="InterPro" id="IPR020939">
    <property type="entry name" value="Ribosomal_bL34_CS"/>
</dbReference>
<dbReference type="NCBIfam" id="TIGR01030">
    <property type="entry name" value="rpmH_bact"/>
    <property type="match status" value="1"/>
</dbReference>
<dbReference type="PANTHER" id="PTHR14503:SF4">
    <property type="entry name" value="LARGE RIBOSOMAL SUBUNIT PROTEIN BL34M"/>
    <property type="match status" value="1"/>
</dbReference>
<dbReference type="PANTHER" id="PTHR14503">
    <property type="entry name" value="MITOCHONDRIAL RIBOSOMAL PROTEIN 34 FAMILY MEMBER"/>
    <property type="match status" value="1"/>
</dbReference>
<dbReference type="Pfam" id="PF00468">
    <property type="entry name" value="Ribosomal_L34"/>
    <property type="match status" value="1"/>
</dbReference>
<dbReference type="PROSITE" id="PS00784">
    <property type="entry name" value="RIBOSOMAL_L34"/>
    <property type="match status" value="1"/>
</dbReference>
<proteinExistence type="inferred from homology"/>
<evidence type="ECO:0000255" key="1">
    <source>
        <dbReference type="HAMAP-Rule" id="MF_00391"/>
    </source>
</evidence>
<evidence type="ECO:0000256" key="2">
    <source>
        <dbReference type="SAM" id="MobiDB-lite"/>
    </source>
</evidence>
<evidence type="ECO:0000305" key="3"/>
<reference key="1">
    <citation type="journal article" date="2009" name="BMC Genomics">
        <title>Genome evolution driven by host adaptations results in a more virulent and antimicrobial-resistant Streptococcus pneumoniae serotype 14.</title>
        <authorList>
            <person name="Ding F."/>
            <person name="Tang P."/>
            <person name="Hsu M.-H."/>
            <person name="Cui P."/>
            <person name="Hu S."/>
            <person name="Yu J."/>
            <person name="Chiu C.-H."/>
        </authorList>
    </citation>
    <scope>NUCLEOTIDE SEQUENCE [LARGE SCALE GENOMIC DNA]</scope>
    <source>
        <strain>CGSP14</strain>
    </source>
</reference>
<organism>
    <name type="scientific">Streptococcus pneumoniae (strain CGSP14)</name>
    <dbReference type="NCBI Taxonomy" id="516950"/>
    <lineage>
        <taxon>Bacteria</taxon>
        <taxon>Bacillati</taxon>
        <taxon>Bacillota</taxon>
        <taxon>Bacilli</taxon>
        <taxon>Lactobacillales</taxon>
        <taxon>Streptococcaceae</taxon>
        <taxon>Streptococcus</taxon>
    </lineage>
</organism>
<name>RL34_STRPS</name>